<evidence type="ECO:0000255" key="1"/>
<evidence type="ECO:0000255" key="2">
    <source>
        <dbReference type="PROSITE-ProRule" id="PRU00131"/>
    </source>
</evidence>
<evidence type="ECO:0000305" key="3"/>
<sequence length="211" mass="23159">MAVLSLLLLGGLWSAVGASNMAVVTCGSVVKLLNTRHNVRLHSHDVRYGSGSGQQSVTGVTSVDDSNSYWRIRGKTATVCERGTPIKCGQPIRLTHINTGRNLHSHHFTSPLSGNQEVSAFGEEGEGDYLDDWTVLCNGPYWVRDGEVRFKHSSTDVLLSVTGEQYGRPISGQKEVHGMAQPSQNNYWKAMEGIFMKPSELLRAEVHHAEL</sequence>
<name>SDF2_MOUSE</name>
<organism>
    <name type="scientific">Mus musculus</name>
    <name type="common">Mouse</name>
    <dbReference type="NCBI Taxonomy" id="10090"/>
    <lineage>
        <taxon>Eukaryota</taxon>
        <taxon>Metazoa</taxon>
        <taxon>Chordata</taxon>
        <taxon>Craniata</taxon>
        <taxon>Vertebrata</taxon>
        <taxon>Euteleostomi</taxon>
        <taxon>Mammalia</taxon>
        <taxon>Eutheria</taxon>
        <taxon>Euarchontoglires</taxon>
        <taxon>Glires</taxon>
        <taxon>Rodentia</taxon>
        <taxon>Myomorpha</taxon>
        <taxon>Muroidea</taxon>
        <taxon>Muridae</taxon>
        <taxon>Murinae</taxon>
        <taxon>Mus</taxon>
        <taxon>Mus</taxon>
    </lineage>
</organism>
<keyword id="KW-1185">Reference proteome</keyword>
<keyword id="KW-0677">Repeat</keyword>
<keyword id="KW-0964">Secreted</keyword>
<keyword id="KW-0732">Signal</keyword>
<dbReference type="EMBL" id="D50646">
    <property type="protein sequence ID" value="BAA09313.1"/>
    <property type="molecule type" value="mRNA"/>
</dbReference>
<dbReference type="EMBL" id="AK002496">
    <property type="protein sequence ID" value="BAB22144.2"/>
    <property type="status" value="ALT_INIT"/>
    <property type="molecule type" value="mRNA"/>
</dbReference>
<dbReference type="EMBL" id="BC058798">
    <property type="protein sequence ID" value="AAH58798.1"/>
    <property type="molecule type" value="mRNA"/>
</dbReference>
<dbReference type="CCDS" id="CCDS25096.2"/>
<dbReference type="PIR" id="JC5105">
    <property type="entry name" value="JC5105"/>
</dbReference>
<dbReference type="RefSeq" id="NP_033169.3">
    <property type="nucleotide sequence ID" value="NM_009143.3"/>
</dbReference>
<dbReference type="SMR" id="Q9DCT5"/>
<dbReference type="BioGRID" id="203139">
    <property type="interactions" value="12"/>
</dbReference>
<dbReference type="FunCoup" id="Q9DCT5">
    <property type="interactions" value="1662"/>
</dbReference>
<dbReference type="STRING" id="10090.ENSMUSP00000002133"/>
<dbReference type="PhosphoSitePlus" id="Q9DCT5"/>
<dbReference type="SwissPalm" id="Q9DCT5"/>
<dbReference type="PaxDb" id="10090-ENSMUSP00000002133"/>
<dbReference type="PeptideAtlas" id="Q9DCT5"/>
<dbReference type="ProteomicsDB" id="253431"/>
<dbReference type="Pumba" id="Q9DCT5"/>
<dbReference type="DNASU" id="20316"/>
<dbReference type="Ensembl" id="ENSMUST00000002133.9">
    <property type="protein sequence ID" value="ENSMUSP00000002133.10"/>
    <property type="gene ID" value="ENSMUSG00000002064.11"/>
</dbReference>
<dbReference type="GeneID" id="20316"/>
<dbReference type="KEGG" id="mmu:20316"/>
<dbReference type="UCSC" id="uc007kiq.2">
    <property type="organism name" value="mouse"/>
</dbReference>
<dbReference type="AGR" id="MGI:108019"/>
<dbReference type="CTD" id="6388"/>
<dbReference type="MGI" id="MGI:108019">
    <property type="gene designation" value="Sdf2"/>
</dbReference>
<dbReference type="eggNOG" id="KOG3358">
    <property type="taxonomic scope" value="Eukaryota"/>
</dbReference>
<dbReference type="GeneTree" id="ENSGT00940000158885"/>
<dbReference type="InParanoid" id="Q9DCT5"/>
<dbReference type="OrthoDB" id="5588846at2759"/>
<dbReference type="PhylomeDB" id="Q9DCT5"/>
<dbReference type="TreeFam" id="TF314557"/>
<dbReference type="BioGRID-ORCS" id="20316">
    <property type="hits" value="4 hits in 79 CRISPR screens"/>
</dbReference>
<dbReference type="ChiTaRS" id="Sdf2">
    <property type="organism name" value="mouse"/>
</dbReference>
<dbReference type="PRO" id="PR:Q9DCT5"/>
<dbReference type="Proteomes" id="UP000000589">
    <property type="component" value="Chromosome 11"/>
</dbReference>
<dbReference type="RNAct" id="Q9DCT5">
    <property type="molecule type" value="protein"/>
</dbReference>
<dbReference type="GO" id="GO:0005783">
    <property type="term" value="C:endoplasmic reticulum"/>
    <property type="evidence" value="ECO:0007669"/>
    <property type="project" value="Ensembl"/>
</dbReference>
<dbReference type="GO" id="GO:0005576">
    <property type="term" value="C:extracellular region"/>
    <property type="evidence" value="ECO:0007669"/>
    <property type="project" value="UniProtKB-SubCell"/>
</dbReference>
<dbReference type="GO" id="GO:0101031">
    <property type="term" value="C:protein folding chaperone complex"/>
    <property type="evidence" value="ECO:0007669"/>
    <property type="project" value="Ensembl"/>
</dbReference>
<dbReference type="GO" id="GO:0051787">
    <property type="term" value="F:misfolded protein binding"/>
    <property type="evidence" value="ECO:0007669"/>
    <property type="project" value="Ensembl"/>
</dbReference>
<dbReference type="GO" id="GO:0051085">
    <property type="term" value="P:chaperone cofactor-dependent protein refolding"/>
    <property type="evidence" value="ECO:0007669"/>
    <property type="project" value="Ensembl"/>
</dbReference>
<dbReference type="CDD" id="cd23293">
    <property type="entry name" value="beta-trefoil_MIR_SDF2_meta"/>
    <property type="match status" value="1"/>
</dbReference>
<dbReference type="FunFam" id="2.80.10.50:FF:000023">
    <property type="entry name" value="Stromal cell-derived factor 2-like 1"/>
    <property type="match status" value="1"/>
</dbReference>
<dbReference type="Gene3D" id="2.80.10.50">
    <property type="match status" value="1"/>
</dbReference>
<dbReference type="InterPro" id="IPR036300">
    <property type="entry name" value="MIR_dom_sf"/>
</dbReference>
<dbReference type="InterPro" id="IPR016093">
    <property type="entry name" value="MIR_motif"/>
</dbReference>
<dbReference type="PANTHER" id="PTHR46809:SF3">
    <property type="entry name" value="STROMAL CELL-DERIVED FACTOR 2"/>
    <property type="match status" value="1"/>
</dbReference>
<dbReference type="PANTHER" id="PTHR46809">
    <property type="entry name" value="STROMAL CELL-DERIVED FACTOR 2-LIKE PROTEIN"/>
    <property type="match status" value="1"/>
</dbReference>
<dbReference type="Pfam" id="PF02815">
    <property type="entry name" value="MIR"/>
    <property type="match status" value="1"/>
</dbReference>
<dbReference type="SMART" id="SM00472">
    <property type="entry name" value="MIR"/>
    <property type="match status" value="3"/>
</dbReference>
<dbReference type="SUPFAM" id="SSF82109">
    <property type="entry name" value="MIR domain"/>
    <property type="match status" value="1"/>
</dbReference>
<dbReference type="PROSITE" id="PS50919">
    <property type="entry name" value="MIR"/>
    <property type="match status" value="3"/>
</dbReference>
<comment type="subcellular location">
    <subcellularLocation>
        <location>Secreted</location>
    </subcellularLocation>
</comment>
<comment type="tissue specificity">
    <text>Ubiquitously expressed with highest expression in liver and kidney.</text>
</comment>
<comment type="sequence caution" evidence="3">
    <conflict type="erroneous initiation">
        <sequence resource="EMBL-CDS" id="BAB22144"/>
    </conflict>
</comment>
<protein>
    <recommendedName>
        <fullName>Stromal cell-derived factor 2</fullName>
        <shortName>SDF-2</shortName>
    </recommendedName>
</protein>
<reference key="1">
    <citation type="journal article" date="1996" name="Gene">
        <title>Isolation and characterization of a novel secretory protein, stromal cell-derived factor-2 (SDF-2) using the signal sequence trap method.</title>
        <authorList>
            <person name="Hamada T."/>
            <person name="Tashiro K."/>
            <person name="Tada H."/>
            <person name="Inazawa J."/>
            <person name="Shirozu M."/>
            <person name="Shibahara K."/>
            <person name="Nakamura T."/>
            <person name="Martina N."/>
            <person name="Nakano T."/>
            <person name="Honjo T."/>
        </authorList>
    </citation>
    <scope>NUCLEOTIDE SEQUENCE [MRNA]</scope>
</reference>
<reference key="2">
    <citation type="journal article" date="2005" name="Science">
        <title>The transcriptional landscape of the mammalian genome.</title>
        <authorList>
            <person name="Carninci P."/>
            <person name="Kasukawa T."/>
            <person name="Katayama S."/>
            <person name="Gough J."/>
            <person name="Frith M.C."/>
            <person name="Maeda N."/>
            <person name="Oyama R."/>
            <person name="Ravasi T."/>
            <person name="Lenhard B."/>
            <person name="Wells C."/>
            <person name="Kodzius R."/>
            <person name="Shimokawa K."/>
            <person name="Bajic V.B."/>
            <person name="Brenner S.E."/>
            <person name="Batalov S."/>
            <person name="Forrest A.R."/>
            <person name="Zavolan M."/>
            <person name="Davis M.J."/>
            <person name="Wilming L.G."/>
            <person name="Aidinis V."/>
            <person name="Allen J.E."/>
            <person name="Ambesi-Impiombato A."/>
            <person name="Apweiler R."/>
            <person name="Aturaliya R.N."/>
            <person name="Bailey T.L."/>
            <person name="Bansal M."/>
            <person name="Baxter L."/>
            <person name="Beisel K.W."/>
            <person name="Bersano T."/>
            <person name="Bono H."/>
            <person name="Chalk A.M."/>
            <person name="Chiu K.P."/>
            <person name="Choudhary V."/>
            <person name="Christoffels A."/>
            <person name="Clutterbuck D.R."/>
            <person name="Crowe M.L."/>
            <person name="Dalla E."/>
            <person name="Dalrymple B.P."/>
            <person name="de Bono B."/>
            <person name="Della Gatta G."/>
            <person name="di Bernardo D."/>
            <person name="Down T."/>
            <person name="Engstrom P."/>
            <person name="Fagiolini M."/>
            <person name="Faulkner G."/>
            <person name="Fletcher C.F."/>
            <person name="Fukushima T."/>
            <person name="Furuno M."/>
            <person name="Futaki S."/>
            <person name="Gariboldi M."/>
            <person name="Georgii-Hemming P."/>
            <person name="Gingeras T.R."/>
            <person name="Gojobori T."/>
            <person name="Green R.E."/>
            <person name="Gustincich S."/>
            <person name="Harbers M."/>
            <person name="Hayashi Y."/>
            <person name="Hensch T.K."/>
            <person name="Hirokawa N."/>
            <person name="Hill D."/>
            <person name="Huminiecki L."/>
            <person name="Iacono M."/>
            <person name="Ikeo K."/>
            <person name="Iwama A."/>
            <person name="Ishikawa T."/>
            <person name="Jakt M."/>
            <person name="Kanapin A."/>
            <person name="Katoh M."/>
            <person name="Kawasawa Y."/>
            <person name="Kelso J."/>
            <person name="Kitamura H."/>
            <person name="Kitano H."/>
            <person name="Kollias G."/>
            <person name="Krishnan S.P."/>
            <person name="Kruger A."/>
            <person name="Kummerfeld S.K."/>
            <person name="Kurochkin I.V."/>
            <person name="Lareau L.F."/>
            <person name="Lazarevic D."/>
            <person name="Lipovich L."/>
            <person name="Liu J."/>
            <person name="Liuni S."/>
            <person name="McWilliam S."/>
            <person name="Madan Babu M."/>
            <person name="Madera M."/>
            <person name="Marchionni L."/>
            <person name="Matsuda H."/>
            <person name="Matsuzawa S."/>
            <person name="Miki H."/>
            <person name="Mignone F."/>
            <person name="Miyake S."/>
            <person name="Morris K."/>
            <person name="Mottagui-Tabar S."/>
            <person name="Mulder N."/>
            <person name="Nakano N."/>
            <person name="Nakauchi H."/>
            <person name="Ng P."/>
            <person name="Nilsson R."/>
            <person name="Nishiguchi S."/>
            <person name="Nishikawa S."/>
            <person name="Nori F."/>
            <person name="Ohara O."/>
            <person name="Okazaki Y."/>
            <person name="Orlando V."/>
            <person name="Pang K.C."/>
            <person name="Pavan W.J."/>
            <person name="Pavesi G."/>
            <person name="Pesole G."/>
            <person name="Petrovsky N."/>
            <person name="Piazza S."/>
            <person name="Reed J."/>
            <person name="Reid J.F."/>
            <person name="Ring B.Z."/>
            <person name="Ringwald M."/>
            <person name="Rost B."/>
            <person name="Ruan Y."/>
            <person name="Salzberg S.L."/>
            <person name="Sandelin A."/>
            <person name="Schneider C."/>
            <person name="Schoenbach C."/>
            <person name="Sekiguchi K."/>
            <person name="Semple C.A."/>
            <person name="Seno S."/>
            <person name="Sessa L."/>
            <person name="Sheng Y."/>
            <person name="Shibata Y."/>
            <person name="Shimada H."/>
            <person name="Shimada K."/>
            <person name="Silva D."/>
            <person name="Sinclair B."/>
            <person name="Sperling S."/>
            <person name="Stupka E."/>
            <person name="Sugiura K."/>
            <person name="Sultana R."/>
            <person name="Takenaka Y."/>
            <person name="Taki K."/>
            <person name="Tammoja K."/>
            <person name="Tan S.L."/>
            <person name="Tang S."/>
            <person name="Taylor M.S."/>
            <person name="Tegner J."/>
            <person name="Teichmann S.A."/>
            <person name="Ueda H.R."/>
            <person name="van Nimwegen E."/>
            <person name="Verardo R."/>
            <person name="Wei C.L."/>
            <person name="Yagi K."/>
            <person name="Yamanishi H."/>
            <person name="Zabarovsky E."/>
            <person name="Zhu S."/>
            <person name="Zimmer A."/>
            <person name="Hide W."/>
            <person name="Bult C."/>
            <person name="Grimmond S.M."/>
            <person name="Teasdale R.D."/>
            <person name="Liu E.T."/>
            <person name="Brusic V."/>
            <person name="Quackenbush J."/>
            <person name="Wahlestedt C."/>
            <person name="Mattick J.S."/>
            <person name="Hume D.A."/>
            <person name="Kai C."/>
            <person name="Sasaki D."/>
            <person name="Tomaru Y."/>
            <person name="Fukuda S."/>
            <person name="Kanamori-Katayama M."/>
            <person name="Suzuki M."/>
            <person name="Aoki J."/>
            <person name="Arakawa T."/>
            <person name="Iida J."/>
            <person name="Imamura K."/>
            <person name="Itoh M."/>
            <person name="Kato T."/>
            <person name="Kawaji H."/>
            <person name="Kawagashira N."/>
            <person name="Kawashima T."/>
            <person name="Kojima M."/>
            <person name="Kondo S."/>
            <person name="Konno H."/>
            <person name="Nakano K."/>
            <person name="Ninomiya N."/>
            <person name="Nishio T."/>
            <person name="Okada M."/>
            <person name="Plessy C."/>
            <person name="Shibata K."/>
            <person name="Shiraki T."/>
            <person name="Suzuki S."/>
            <person name="Tagami M."/>
            <person name="Waki K."/>
            <person name="Watahiki A."/>
            <person name="Okamura-Oho Y."/>
            <person name="Suzuki H."/>
            <person name="Kawai J."/>
            <person name="Hayashizaki Y."/>
        </authorList>
    </citation>
    <scope>NUCLEOTIDE SEQUENCE [LARGE SCALE MRNA]</scope>
    <source>
        <strain>C57BL/6J</strain>
        <tissue>Kidney</tissue>
    </source>
</reference>
<reference key="3">
    <citation type="journal article" date="2004" name="Genome Res.">
        <title>The status, quality, and expansion of the NIH full-length cDNA project: the Mammalian Gene Collection (MGC).</title>
        <authorList>
            <consortium name="The MGC Project Team"/>
        </authorList>
    </citation>
    <scope>NUCLEOTIDE SEQUENCE [LARGE SCALE MRNA]</scope>
    <source>
        <strain>FVB/N-3</strain>
        <tissue>Mammary gland</tissue>
    </source>
</reference>
<reference key="4">
    <citation type="journal article" date="2010" name="Cell">
        <title>A tissue-specific atlas of mouse protein phosphorylation and expression.</title>
        <authorList>
            <person name="Huttlin E.L."/>
            <person name="Jedrychowski M.P."/>
            <person name="Elias J.E."/>
            <person name="Goswami T."/>
            <person name="Rad R."/>
            <person name="Beausoleil S.A."/>
            <person name="Villen J."/>
            <person name="Haas W."/>
            <person name="Sowa M.E."/>
            <person name="Gygi S.P."/>
        </authorList>
    </citation>
    <scope>IDENTIFICATION BY MASS SPECTROMETRY [LARGE SCALE ANALYSIS]</scope>
    <source>
        <tissue>Brain</tissue>
        <tissue>Brown adipose tissue</tissue>
        <tissue>Heart</tissue>
        <tissue>Kidney</tissue>
        <tissue>Liver</tissue>
        <tissue>Lung</tissue>
        <tissue>Testis</tissue>
    </source>
</reference>
<proteinExistence type="evidence at protein level"/>
<accession>Q9DCT5</accession>
<accession>P97307</accession>
<feature type="signal peptide" evidence="1">
    <location>
        <begin position="1"/>
        <end position="18"/>
    </location>
</feature>
<feature type="chain" id="PRO_0000031956" description="Stromal cell-derived factor 2">
    <location>
        <begin position="19"/>
        <end position="211"/>
    </location>
</feature>
<feature type="domain" description="MIR 1" evidence="2">
    <location>
        <begin position="21"/>
        <end position="75"/>
    </location>
</feature>
<feature type="domain" description="MIR 2" evidence="2">
    <location>
        <begin position="83"/>
        <end position="138"/>
    </location>
</feature>
<feature type="domain" description="MIR 3" evidence="2">
    <location>
        <begin position="139"/>
        <end position="193"/>
    </location>
</feature>
<feature type="sequence conflict" description="In Ref. 1; BAA09313." evidence="3" ref="1">
    <original>A</original>
    <variation>S</variation>
    <location>
        <position position="120"/>
    </location>
</feature>
<feature type="sequence conflict" description="In Ref. 1; BAA09313." evidence="3" ref="1">
    <original>N</original>
    <variation>I</variation>
    <location>
        <position position="138"/>
    </location>
</feature>
<feature type="sequence conflict" description="In Ref. 1; BAA09313." evidence="3" ref="1">
    <original>K</original>
    <variation>Q</variation>
    <location>
        <position position="174"/>
    </location>
</feature>
<gene>
    <name type="primary">Sdf2</name>
</gene>